<accession>Q6P5P3</accession>
<reference key="1">
    <citation type="journal article" date="2004" name="Genome Res.">
        <title>The status, quality, and expansion of the NIH full-length cDNA project: the Mammalian Gene Collection (MGC).</title>
        <authorList>
            <consortium name="The MGC Project Team"/>
        </authorList>
    </citation>
    <scope>NUCLEOTIDE SEQUENCE [LARGE SCALE MRNA]</scope>
    <source>
        <tissue>Pituitary</tissue>
    </source>
</reference>
<protein>
    <recommendedName>
        <fullName>Tetratricopeptide repeat protein 9C</fullName>
        <shortName>TPR repeat protein 9C</shortName>
    </recommendedName>
</protein>
<evidence type="ECO:0000305" key="1"/>
<gene>
    <name type="primary">Ttc9c</name>
</gene>
<sequence>MEKRLQEAQLYKEEGNQRYREGKYRDAVSRYHRALLQLRGLDPSLPSPIPNLGPQGPALTPEQENILHTIQTDCYNNLAACLLQMEPVKYERVREYSQKVLERQPENAKALYRAGVAFFHLQDYDQARHYLLAAVNRQPKDANVRRYLQLTQSELSSYHRKEKQLYLGMFA</sequence>
<keyword id="KW-1185">Reference proteome</keyword>
<keyword id="KW-0677">Repeat</keyword>
<keyword id="KW-0802">TPR repeat</keyword>
<dbReference type="EMBL" id="BC062803">
    <property type="protein sequence ID" value="AAH62803.1"/>
    <property type="molecule type" value="mRNA"/>
</dbReference>
<dbReference type="RefSeq" id="NP_001007694.1">
    <property type="nucleotide sequence ID" value="NM_001007693.2"/>
</dbReference>
<dbReference type="RefSeq" id="XP_006231047.1">
    <property type="nucleotide sequence ID" value="XM_006230985.5"/>
</dbReference>
<dbReference type="RefSeq" id="XP_006231048.1">
    <property type="nucleotide sequence ID" value="XM_006230986.3"/>
</dbReference>
<dbReference type="RefSeq" id="XP_006231049.1">
    <property type="nucleotide sequence ID" value="XM_006230987.5"/>
</dbReference>
<dbReference type="RefSeq" id="XP_006231050.1">
    <property type="nucleotide sequence ID" value="XM_006230988.5"/>
</dbReference>
<dbReference type="RefSeq" id="XP_063120494.1">
    <property type="nucleotide sequence ID" value="XM_063264424.1"/>
</dbReference>
<dbReference type="RefSeq" id="XP_063120495.1">
    <property type="nucleotide sequence ID" value="XM_063264425.1"/>
</dbReference>
<dbReference type="RefSeq" id="XP_063120497.1">
    <property type="nucleotide sequence ID" value="XM_063264427.1"/>
</dbReference>
<dbReference type="SMR" id="Q6P5P3"/>
<dbReference type="BioGRID" id="259310">
    <property type="interactions" value="1"/>
</dbReference>
<dbReference type="FunCoup" id="Q6P5P3">
    <property type="interactions" value="3014"/>
</dbReference>
<dbReference type="STRING" id="10116.ENSRNOP00000026376"/>
<dbReference type="iPTMnet" id="Q6P5P3"/>
<dbReference type="PhosphoSitePlus" id="Q6P5P3"/>
<dbReference type="jPOST" id="Q6P5P3"/>
<dbReference type="PaxDb" id="10116-ENSRNOP00000026376"/>
<dbReference type="Ensembl" id="ENSRNOT00000026376.6">
    <property type="protein sequence ID" value="ENSRNOP00000026376.3"/>
    <property type="gene ID" value="ENSRNOG00000019464.6"/>
</dbReference>
<dbReference type="GeneID" id="309196"/>
<dbReference type="KEGG" id="rno:309196"/>
<dbReference type="UCSC" id="RGD:1359253">
    <property type="organism name" value="rat"/>
</dbReference>
<dbReference type="AGR" id="RGD:1359253"/>
<dbReference type="CTD" id="283237"/>
<dbReference type="RGD" id="1359253">
    <property type="gene designation" value="Ttc9c"/>
</dbReference>
<dbReference type="eggNOG" id="ENOG502RXZG">
    <property type="taxonomic scope" value="Eukaryota"/>
</dbReference>
<dbReference type="GeneTree" id="ENSGT00940000161805"/>
<dbReference type="HOGENOM" id="CLU_100621_1_0_1"/>
<dbReference type="InParanoid" id="Q6P5P3"/>
<dbReference type="OMA" id="KIYANMS"/>
<dbReference type="OrthoDB" id="10355at9989"/>
<dbReference type="PhylomeDB" id="Q6P5P3"/>
<dbReference type="TreeFam" id="TF331917"/>
<dbReference type="PRO" id="PR:Q6P5P3"/>
<dbReference type="Proteomes" id="UP000002494">
    <property type="component" value="Chromosome 1"/>
</dbReference>
<dbReference type="Bgee" id="ENSRNOG00000019464">
    <property type="expression patterns" value="Expressed in thymus and 20 other cell types or tissues"/>
</dbReference>
<dbReference type="Gene3D" id="1.25.40.10">
    <property type="entry name" value="Tetratricopeptide repeat domain"/>
    <property type="match status" value="1"/>
</dbReference>
<dbReference type="InterPro" id="IPR039663">
    <property type="entry name" value="AIP/AIPL1/TTC9"/>
</dbReference>
<dbReference type="InterPro" id="IPR011990">
    <property type="entry name" value="TPR-like_helical_dom_sf"/>
</dbReference>
<dbReference type="InterPro" id="IPR019734">
    <property type="entry name" value="TPR_rpt"/>
</dbReference>
<dbReference type="PANTHER" id="PTHR11242">
    <property type="entry name" value="ARYL HYDROCARBON RECEPTOR INTERACTING PROTEIN RELATED"/>
    <property type="match status" value="1"/>
</dbReference>
<dbReference type="PANTHER" id="PTHR11242:SF14">
    <property type="entry name" value="TETRATRICOPEPTIDE REPEAT PROTEIN 9C"/>
    <property type="match status" value="1"/>
</dbReference>
<dbReference type="Pfam" id="PF14559">
    <property type="entry name" value="TPR_19"/>
    <property type="match status" value="1"/>
</dbReference>
<dbReference type="SMART" id="SM00028">
    <property type="entry name" value="TPR"/>
    <property type="match status" value="3"/>
</dbReference>
<dbReference type="SUPFAM" id="SSF48452">
    <property type="entry name" value="TPR-like"/>
    <property type="match status" value="1"/>
</dbReference>
<dbReference type="PROSITE" id="PS50005">
    <property type="entry name" value="TPR"/>
    <property type="match status" value="2"/>
</dbReference>
<dbReference type="PROSITE" id="PS50293">
    <property type="entry name" value="TPR_REGION"/>
    <property type="match status" value="2"/>
</dbReference>
<proteinExistence type="evidence at transcript level"/>
<feature type="chain" id="PRO_0000294468" description="Tetratricopeptide repeat protein 9C">
    <location>
        <begin position="1"/>
        <end position="171"/>
    </location>
</feature>
<feature type="repeat" description="TPR 1">
    <location>
        <begin position="8"/>
        <end position="41"/>
    </location>
</feature>
<feature type="repeat" description="TPR 2">
    <location>
        <begin position="72"/>
        <end position="107"/>
    </location>
</feature>
<feature type="repeat" description="TPR 3">
    <location>
        <begin position="108"/>
        <end position="141"/>
    </location>
</feature>
<comment type="similarity">
    <text evidence="1">Belongs to the TTC9 family.</text>
</comment>
<name>TTC9C_RAT</name>
<organism>
    <name type="scientific">Rattus norvegicus</name>
    <name type="common">Rat</name>
    <dbReference type="NCBI Taxonomy" id="10116"/>
    <lineage>
        <taxon>Eukaryota</taxon>
        <taxon>Metazoa</taxon>
        <taxon>Chordata</taxon>
        <taxon>Craniata</taxon>
        <taxon>Vertebrata</taxon>
        <taxon>Euteleostomi</taxon>
        <taxon>Mammalia</taxon>
        <taxon>Eutheria</taxon>
        <taxon>Euarchontoglires</taxon>
        <taxon>Glires</taxon>
        <taxon>Rodentia</taxon>
        <taxon>Myomorpha</taxon>
        <taxon>Muroidea</taxon>
        <taxon>Muridae</taxon>
        <taxon>Murinae</taxon>
        <taxon>Rattus</taxon>
    </lineage>
</organism>